<organism>
    <name type="scientific">Mus musculus</name>
    <name type="common">Mouse</name>
    <dbReference type="NCBI Taxonomy" id="10090"/>
    <lineage>
        <taxon>Eukaryota</taxon>
        <taxon>Metazoa</taxon>
        <taxon>Chordata</taxon>
        <taxon>Craniata</taxon>
        <taxon>Vertebrata</taxon>
        <taxon>Euteleostomi</taxon>
        <taxon>Mammalia</taxon>
        <taxon>Eutheria</taxon>
        <taxon>Euarchontoglires</taxon>
        <taxon>Glires</taxon>
        <taxon>Rodentia</taxon>
        <taxon>Myomorpha</taxon>
        <taxon>Muroidea</taxon>
        <taxon>Muridae</taxon>
        <taxon>Murinae</taxon>
        <taxon>Mus</taxon>
        <taxon>Mus</taxon>
    </lineage>
</organism>
<comment type="function">
    <text evidence="4">Contributes to the transparency and refractive index of the lens. Acts as a chaperone, preventing aggregation of various proteins under a wide range of stress conditions. Required for the correct formation of lens intermediate filaments as part of a complex composed of BFSP1, BFSP2 and CRYAA.</text>
</comment>
<comment type="subunit">
    <text evidence="2 4">Heteropolymer composed of three CRYAA and one CRYAB subunits. Inter-subunit bridging via zinc ions enhances stability, which is crucial as there is no protein turn over in the lens. Can also form homodimers and homotetramers (dimers of dimers) which serve as the building blocks of homooligomers (By similarity). Within homooligomers, the zinc-binding motif is created from residues of 3 different molecules. His-123 and Glu-125 from one molecule are ligands of the zinc ion, and His-130 and His-177 residues from additional molecules complete the site with tetrahedral coordination geometry (By similarity). Part of a complex required for lens intermediate filament formation composed of BFSP1, BFSP2 and CRYAA (By similarity).</text>
</comment>
<comment type="subcellular location">
    <subcellularLocation>
        <location evidence="4">Cytoplasm</location>
    </subcellularLocation>
    <subcellularLocation>
        <location evidence="4">Nucleus</location>
    </subcellularLocation>
    <text evidence="4">Translocates to the nucleus during heat shock and resides in sub-nuclear structures known as SC35 speckles or nuclear splicing speckles.</text>
</comment>
<comment type="alternative products">
    <event type="alternative splicing"/>
    <isoform>
        <id>P24622-1</id>
        <name>1</name>
        <name>Minor</name>
        <name>Alpha-A(ins)</name>
        <sequence type="displayed"/>
    </isoform>
    <isoform>
        <id>P24622-2</id>
        <name>2</name>
        <name>Major</name>
        <sequence type="described" ref="VSP_011916"/>
    </isoform>
</comment>
<comment type="PTM">
    <text evidence="4">Acetylation at Lys-93 may increase chaperone activity.</text>
</comment>
<comment type="PTM">
    <text evidence="4">Undergoes age-dependent proteolytical cleavage at the C-terminus.</text>
</comment>
<comment type="miscellaneous">
    <molecule>Isoform 1</molecule>
    <text>Constitutes approximately 10% of the total alpha-A-crystallin in the lens.</text>
</comment>
<comment type="similarity">
    <text evidence="5">Belongs to the small heat shock protein (HSP20) family.</text>
</comment>
<protein>
    <recommendedName>
        <fullName>Alpha-crystallin A chain</fullName>
    </recommendedName>
</protein>
<proteinExistence type="evidence at transcript level"/>
<name>CRYAA_MOUSE</name>
<feature type="chain" id="PRO_0000125872" description="Alpha-crystallin A chain">
    <location>
        <begin position="1"/>
        <end position="196"/>
    </location>
</feature>
<feature type="domain" description="sHSP" evidence="5">
    <location>
        <begin position="76"/>
        <end position="185"/>
    </location>
</feature>
<feature type="region of interest" description="Required for complex formation with BFSP1 and BFSP2" evidence="4">
    <location>
        <begin position="1"/>
        <end position="63"/>
    </location>
</feature>
<feature type="region of interest" description="Disordered" evidence="6">
    <location>
        <begin position="168"/>
        <end position="196"/>
    </location>
</feature>
<feature type="compositionally biased region" description="Basic and acidic residues" evidence="6">
    <location>
        <begin position="176"/>
        <end position="190"/>
    </location>
</feature>
<feature type="binding site" evidence="2">
    <location>
        <position position="123"/>
    </location>
    <ligand>
        <name>Zn(2+)</name>
        <dbReference type="ChEBI" id="CHEBI:29105"/>
        <label>1</label>
    </ligand>
</feature>
<feature type="binding site" evidence="2">
    <location>
        <position position="125"/>
    </location>
    <ligand>
        <name>Zn(2+)</name>
        <dbReference type="ChEBI" id="CHEBI:29105"/>
        <label>1</label>
    </ligand>
</feature>
<feature type="binding site" evidence="2">
    <location>
        <position position="130"/>
    </location>
    <ligand>
        <name>Zn(2+)</name>
        <dbReference type="ChEBI" id="CHEBI:29105"/>
        <label>2</label>
    </ligand>
</feature>
<feature type="binding site" evidence="2">
    <location>
        <position position="177"/>
    </location>
    <ligand>
        <name>Zn(2+)</name>
        <dbReference type="ChEBI" id="CHEBI:29105"/>
        <label>3</label>
    </ligand>
</feature>
<feature type="modified residue" description="N-acetylmethionine" evidence="3 8">
    <location>
        <position position="1"/>
    </location>
</feature>
<feature type="modified residue" description="Deamidated glutamine; partial" evidence="1">
    <location>
        <position position="6"/>
    </location>
</feature>
<feature type="modified residue" description="Phosphoserine" evidence="4">
    <location>
        <position position="45"/>
    </location>
</feature>
<feature type="modified residue" description="Deamidated glutamine; partial" evidence="1">
    <location>
        <position position="50"/>
    </location>
</feature>
<feature type="modified residue" description="N6-acetyllysine" evidence="4">
    <location>
        <position position="93"/>
    </location>
</feature>
<feature type="modified residue" description="N6-acetyllysine" evidence="4">
    <location>
        <position position="122"/>
    </location>
</feature>
<feature type="modified residue" description="Deamidated asparagine; partial" evidence="1">
    <location>
        <position position="124"/>
    </location>
</feature>
<feature type="modified residue" description="Phosphoserine" evidence="2">
    <location>
        <position position="145"/>
    </location>
</feature>
<feature type="modified residue" description="Deamidated asparagine; partial" evidence="1">
    <location>
        <position position="146"/>
    </location>
</feature>
<feature type="modified residue" description="Deamidated glutamine; partial" evidence="1">
    <location>
        <position position="170"/>
    </location>
</feature>
<feature type="glycosylation site" description="O-linked (GlcNAc) serine" evidence="1">
    <location>
        <position position="185"/>
    </location>
</feature>
<feature type="splice variant" id="VSP_011916" description="In isoform 2." evidence="7">
    <location>
        <begin position="64"/>
        <end position="86"/>
    </location>
</feature>
<keyword id="KW-0007">Acetylation</keyword>
<keyword id="KW-0025">Alternative splicing</keyword>
<keyword id="KW-0143">Chaperone</keyword>
<keyword id="KW-0963">Cytoplasm</keyword>
<keyword id="KW-0273">Eye lens protein</keyword>
<keyword id="KW-0325">Glycoprotein</keyword>
<keyword id="KW-0479">Metal-binding</keyword>
<keyword id="KW-0488">Methylation</keyword>
<keyword id="KW-0539">Nucleus</keyword>
<keyword id="KW-0597">Phosphoprotein</keyword>
<keyword id="KW-1185">Reference proteome</keyword>
<keyword id="KW-0862">Zinc</keyword>
<evidence type="ECO:0000250" key="1"/>
<evidence type="ECO:0000250" key="2">
    <source>
        <dbReference type="UniProtKB" id="P02470"/>
    </source>
</evidence>
<evidence type="ECO:0000250" key="3">
    <source>
        <dbReference type="UniProtKB" id="P02474"/>
    </source>
</evidence>
<evidence type="ECO:0000250" key="4">
    <source>
        <dbReference type="UniProtKB" id="P02489"/>
    </source>
</evidence>
<evidence type="ECO:0000255" key="5">
    <source>
        <dbReference type="PROSITE-ProRule" id="PRU00285"/>
    </source>
</evidence>
<evidence type="ECO:0000256" key="6">
    <source>
        <dbReference type="SAM" id="MobiDB-lite"/>
    </source>
</evidence>
<evidence type="ECO:0000303" key="7">
    <source>
    </source>
</evidence>
<evidence type="ECO:0000305" key="8"/>
<gene>
    <name type="primary">Cryaa</name>
    <name type="synonym">Crya1</name>
</gene>
<reference key="1">
    <citation type="journal article" date="1983" name="Cell">
        <title>Alternative RNA splicing of the murine alpha A-crystallin gene: protein-coding information within an intron.</title>
        <authorList>
            <person name="King C.R."/>
            <person name="Piatigorsky J."/>
        </authorList>
    </citation>
    <scope>NUCLEOTIDE SEQUENCE [GENOMIC DNA] (ISOFORMS 1 AND 2)</scope>
</reference>
<reference key="2">
    <citation type="journal article" date="1982" name="Science">
        <title>Alpha A-crystallin messenger RNA of the mouse lens: more noncoding than coding sequences.</title>
        <authorList>
            <person name="King C.R."/>
            <person name="Shinohara T."/>
            <person name="Piatigorsky J."/>
        </authorList>
    </citation>
    <scope>NUCLEOTIDE SEQUENCE [MRNA] OF 11-196 (ISOFORM 2)</scope>
</reference>
<sequence length="196" mass="22489">MDVTIQHPWFKRALGPFYPSRLFDQFFGEGLFEYDLLPFLSSTISPYYRQSLFRTVLDSGISELMTHMWFVMHQPHAGNPKNNPVKVRSDRDKFVIFLDVKHFSPEDLTVKVLEDFVEIHGKHNERQDDHGYISREFHRRYRLPSNVDQSALSCSLSADGMLTFSGPKVQSGLDAGHSERAIPVSREEKPSSAPSS</sequence>
<dbReference type="EMBL" id="V00730">
    <property type="protein sequence ID" value="CAA24108.2"/>
    <property type="molecule type" value="Genomic_DNA"/>
</dbReference>
<dbReference type="EMBL" id="V00730">
    <property type="protein sequence ID" value="CAA24109.2"/>
    <property type="molecule type" value="Genomic_DNA"/>
</dbReference>
<dbReference type="EMBL" id="J00375">
    <property type="protein sequence ID" value="AAA37469.1"/>
    <property type="molecule type" value="Genomic_DNA"/>
</dbReference>
<dbReference type="EMBL" id="J00375">
    <property type="protein sequence ID" value="AAA37470.1"/>
    <property type="molecule type" value="Genomic_DNA"/>
</dbReference>
<dbReference type="EMBL" id="J00376">
    <property type="protein sequence ID" value="AAA37471.1"/>
    <property type="molecule type" value="mRNA"/>
</dbReference>
<dbReference type="CCDS" id="CCDS37551.1">
    <molecule id="P24622-1"/>
</dbReference>
<dbReference type="CCDS" id="CCDS89061.1">
    <molecule id="P24622-2"/>
</dbReference>
<dbReference type="PIR" id="A02893">
    <property type="entry name" value="CYMSA"/>
</dbReference>
<dbReference type="PIR" id="B18860">
    <property type="entry name" value="B18860"/>
</dbReference>
<dbReference type="RefSeq" id="NP_001265499.1">
    <molecule id="P24622-2"/>
    <property type="nucleotide sequence ID" value="NM_001278570.1"/>
</dbReference>
<dbReference type="RefSeq" id="NP_038529.1">
    <molecule id="P24622-1"/>
    <property type="nucleotide sequence ID" value="NM_013501.3"/>
</dbReference>
<dbReference type="SMR" id="P24622"/>
<dbReference type="BioGRID" id="198908">
    <property type="interactions" value="1"/>
</dbReference>
<dbReference type="FunCoup" id="P24622">
    <property type="interactions" value="735"/>
</dbReference>
<dbReference type="STRING" id="10090.ENSMUSP00000019192"/>
<dbReference type="GlyCosmos" id="P24622">
    <property type="glycosylation" value="1 site, No reported glycans"/>
</dbReference>
<dbReference type="GlyGen" id="P24622">
    <property type="glycosylation" value="1 site, 1 O-linked glycan (1 site)"/>
</dbReference>
<dbReference type="iPTMnet" id="P24622"/>
<dbReference type="PhosphoSitePlus" id="P24622"/>
<dbReference type="PaxDb" id="10090-ENSMUSP00000019192"/>
<dbReference type="ProteomicsDB" id="285337">
    <molecule id="P24622-1"/>
</dbReference>
<dbReference type="ProteomicsDB" id="285338">
    <molecule id="P24622-2"/>
</dbReference>
<dbReference type="DNASU" id="12954"/>
<dbReference type="Ensembl" id="ENSMUST00000019192.8">
    <molecule id="P24622-1"/>
    <property type="protein sequence ID" value="ENSMUSP00000019192.6"/>
    <property type="gene ID" value="ENSMUSG00000024041.11"/>
</dbReference>
<dbReference type="Ensembl" id="ENSMUST00000228716.3">
    <molecule id="P24622-2"/>
    <property type="protein sequence ID" value="ENSMUSP00000154747.2"/>
    <property type="gene ID" value="ENSMUSG00000024041.11"/>
</dbReference>
<dbReference type="GeneID" id="12954"/>
<dbReference type="KEGG" id="mmu:12954"/>
<dbReference type="UCSC" id="uc008bvp.2">
    <molecule id="P24622-1"/>
    <property type="organism name" value="mouse"/>
</dbReference>
<dbReference type="AGR" id="MGI:88515"/>
<dbReference type="CTD" id="1409"/>
<dbReference type="MGI" id="MGI:88515">
    <property type="gene designation" value="Cryaa"/>
</dbReference>
<dbReference type="VEuPathDB" id="HostDB:ENSMUSG00000024041"/>
<dbReference type="eggNOG" id="KOG3591">
    <property type="taxonomic scope" value="Eukaryota"/>
</dbReference>
<dbReference type="GeneTree" id="ENSGT00940000160159"/>
<dbReference type="HOGENOM" id="CLU_095001_2_0_1"/>
<dbReference type="InParanoid" id="P24622"/>
<dbReference type="OMA" id="QQDDHGY"/>
<dbReference type="OrthoDB" id="1431247at2759"/>
<dbReference type="PhylomeDB" id="P24622"/>
<dbReference type="TreeFam" id="TF105049"/>
<dbReference type="BioGRID-ORCS" id="12954">
    <property type="hits" value="6 hits in 76 CRISPR screens"/>
</dbReference>
<dbReference type="ChiTaRS" id="Cryaa">
    <property type="organism name" value="mouse"/>
</dbReference>
<dbReference type="PRO" id="PR:P24622"/>
<dbReference type="Proteomes" id="UP000000589">
    <property type="component" value="Chromosome 17"/>
</dbReference>
<dbReference type="RNAct" id="P24622">
    <property type="molecule type" value="protein"/>
</dbReference>
<dbReference type="Bgee" id="ENSMUSG00000024041">
    <property type="expression patterns" value="Expressed in lens of camera-type eye and 54 other cell types or tissues"/>
</dbReference>
<dbReference type="ExpressionAtlas" id="P24622">
    <property type="expression patterns" value="baseline and differential"/>
</dbReference>
<dbReference type="GO" id="GO:0005737">
    <property type="term" value="C:cytoplasm"/>
    <property type="evidence" value="ECO:0000314"/>
    <property type="project" value="MGI"/>
</dbReference>
<dbReference type="GO" id="GO:0005829">
    <property type="term" value="C:cytosol"/>
    <property type="evidence" value="ECO:0007669"/>
    <property type="project" value="Ensembl"/>
</dbReference>
<dbReference type="GO" id="GO:0005654">
    <property type="term" value="C:nucleoplasm"/>
    <property type="evidence" value="ECO:0007669"/>
    <property type="project" value="Ensembl"/>
</dbReference>
<dbReference type="GO" id="GO:0005634">
    <property type="term" value="C:nucleus"/>
    <property type="evidence" value="ECO:0000250"/>
    <property type="project" value="UniProtKB"/>
</dbReference>
<dbReference type="GO" id="GO:0032991">
    <property type="term" value="C:protein-containing complex"/>
    <property type="evidence" value="ECO:0007669"/>
    <property type="project" value="Ensembl"/>
</dbReference>
<dbReference type="GO" id="GO:0042802">
    <property type="term" value="F:identical protein binding"/>
    <property type="evidence" value="ECO:0007669"/>
    <property type="project" value="Ensembl"/>
</dbReference>
<dbReference type="GO" id="GO:0046872">
    <property type="term" value="F:metal ion binding"/>
    <property type="evidence" value="ECO:0007669"/>
    <property type="project" value="UniProtKB-KW"/>
</dbReference>
<dbReference type="GO" id="GO:0005212">
    <property type="term" value="F:structural constituent of eye lens"/>
    <property type="evidence" value="ECO:0000304"/>
    <property type="project" value="MGI"/>
</dbReference>
<dbReference type="GO" id="GO:0051082">
    <property type="term" value="F:unfolded protein binding"/>
    <property type="evidence" value="ECO:0007669"/>
    <property type="project" value="Ensembl"/>
</dbReference>
<dbReference type="GO" id="GO:0007015">
    <property type="term" value="P:actin filament organization"/>
    <property type="evidence" value="ECO:0000315"/>
    <property type="project" value="MGI"/>
</dbReference>
<dbReference type="GO" id="GO:0006915">
    <property type="term" value="P:apoptotic process"/>
    <property type="evidence" value="ECO:0000315"/>
    <property type="project" value="MGI"/>
</dbReference>
<dbReference type="GO" id="GO:0060561">
    <property type="term" value="P:apoptotic process involved in morphogenesis"/>
    <property type="evidence" value="ECO:0000316"/>
    <property type="project" value="MGI"/>
</dbReference>
<dbReference type="GO" id="GO:0043010">
    <property type="term" value="P:camera-type eye development"/>
    <property type="evidence" value="ECO:0000316"/>
    <property type="project" value="MGI"/>
</dbReference>
<dbReference type="GO" id="GO:0048596">
    <property type="term" value="P:embryonic camera-type eye morphogenesis"/>
    <property type="evidence" value="ECO:0000315"/>
    <property type="project" value="MGI"/>
</dbReference>
<dbReference type="GO" id="GO:0002088">
    <property type="term" value="P:lens development in camera-type eye"/>
    <property type="evidence" value="ECO:0000315"/>
    <property type="project" value="MGI"/>
</dbReference>
<dbReference type="GO" id="GO:0070309">
    <property type="term" value="P:lens fiber cell morphogenesis"/>
    <property type="evidence" value="ECO:0000315"/>
    <property type="project" value="MGI"/>
</dbReference>
<dbReference type="GO" id="GO:0002089">
    <property type="term" value="P:lens morphogenesis in camera-type eye"/>
    <property type="evidence" value="ECO:0000315"/>
    <property type="project" value="MGI"/>
</dbReference>
<dbReference type="GO" id="GO:0007017">
    <property type="term" value="P:microtubule-based process"/>
    <property type="evidence" value="ECO:0000315"/>
    <property type="project" value="MGI"/>
</dbReference>
<dbReference type="GO" id="GO:0007005">
    <property type="term" value="P:mitochondrion organization"/>
    <property type="evidence" value="ECO:0000315"/>
    <property type="project" value="MGI"/>
</dbReference>
<dbReference type="GO" id="GO:0043066">
    <property type="term" value="P:negative regulation of apoptotic process"/>
    <property type="evidence" value="ECO:0000315"/>
    <property type="project" value="MGI"/>
</dbReference>
<dbReference type="GO" id="GO:0010629">
    <property type="term" value="P:negative regulation of gene expression"/>
    <property type="evidence" value="ECO:0000315"/>
    <property type="project" value="MGI"/>
</dbReference>
<dbReference type="GO" id="GO:0032387">
    <property type="term" value="P:negative regulation of intracellular transport"/>
    <property type="evidence" value="ECO:0007669"/>
    <property type="project" value="Ensembl"/>
</dbReference>
<dbReference type="GO" id="GO:0030307">
    <property type="term" value="P:positive regulation of cell growth"/>
    <property type="evidence" value="ECO:0000315"/>
    <property type="project" value="MGI"/>
</dbReference>
<dbReference type="GO" id="GO:0050821">
    <property type="term" value="P:protein stabilization"/>
    <property type="evidence" value="ECO:0007669"/>
    <property type="project" value="Ensembl"/>
</dbReference>
<dbReference type="GO" id="GO:0042542">
    <property type="term" value="P:response to hydrogen peroxide"/>
    <property type="evidence" value="ECO:0000315"/>
    <property type="project" value="MGI"/>
</dbReference>
<dbReference type="GO" id="GO:0001666">
    <property type="term" value="P:response to hypoxia"/>
    <property type="evidence" value="ECO:0000315"/>
    <property type="project" value="MGI"/>
</dbReference>
<dbReference type="GO" id="GO:0070141">
    <property type="term" value="P:response to UV-A"/>
    <property type="evidence" value="ECO:0000315"/>
    <property type="project" value="MGI"/>
</dbReference>
<dbReference type="GO" id="GO:0007021">
    <property type="term" value="P:tubulin complex assembly"/>
    <property type="evidence" value="ECO:0000315"/>
    <property type="project" value="MGI"/>
</dbReference>
<dbReference type="GO" id="GO:0007601">
    <property type="term" value="P:visual perception"/>
    <property type="evidence" value="ECO:0007669"/>
    <property type="project" value="Ensembl"/>
</dbReference>
<dbReference type="FunFam" id="2.60.40.790:FF:000008">
    <property type="entry name" value="Alpha-crystallin A chain"/>
    <property type="match status" value="1"/>
</dbReference>
<dbReference type="Gene3D" id="2.60.40.790">
    <property type="match status" value="1"/>
</dbReference>
<dbReference type="InterPro" id="IPR002068">
    <property type="entry name" value="A-crystallin/Hsp20_dom"/>
</dbReference>
<dbReference type="InterPro" id="IPR001436">
    <property type="entry name" value="Alpha-crystallin/sHSP_animal"/>
</dbReference>
<dbReference type="InterPro" id="IPR003090">
    <property type="entry name" value="Alpha-crystallin_N"/>
</dbReference>
<dbReference type="InterPro" id="IPR008978">
    <property type="entry name" value="HSP20-like_chaperone"/>
</dbReference>
<dbReference type="PANTHER" id="PTHR45640:SF14">
    <property type="entry name" value="ALPHA-CRYSTALLIN A CHAIN"/>
    <property type="match status" value="1"/>
</dbReference>
<dbReference type="PANTHER" id="PTHR45640">
    <property type="entry name" value="HEAT SHOCK PROTEIN HSP-12.2-RELATED"/>
    <property type="match status" value="1"/>
</dbReference>
<dbReference type="Pfam" id="PF00525">
    <property type="entry name" value="Crystallin"/>
    <property type="match status" value="1"/>
</dbReference>
<dbReference type="Pfam" id="PF00011">
    <property type="entry name" value="HSP20"/>
    <property type="match status" value="1"/>
</dbReference>
<dbReference type="PRINTS" id="PR00299">
    <property type="entry name" value="ACRYSTALLIN"/>
</dbReference>
<dbReference type="SUPFAM" id="SSF49764">
    <property type="entry name" value="HSP20-like chaperones"/>
    <property type="match status" value="1"/>
</dbReference>
<dbReference type="PROSITE" id="PS01031">
    <property type="entry name" value="SHSP"/>
    <property type="match status" value="1"/>
</dbReference>
<accession>P24622</accession>
<accession>P02490</accession>
<accession>P02496</accession>
<accession>P82532</accession>
<accession>Q61444</accession>
<accession>Q6LEL4</accession>